<comment type="function">
    <text evidence="1 2 4">Component of the Dot/Icm type IVB secretion system (T4BSS), which is used to inject bacterial effector proteins into eukaryotic host cells (PubMed:17040490, PubMed:22694730, PubMed:32513920). Part of a subcomplex which recruits effector proteins and delivers them to the core transmembrane subcomplex (PubMed:32513920).</text>
</comment>
<comment type="subunit">
    <text evidence="1 2 3 4">The T4BSS is a complex nanomachine composed of several subcomplexes. This subunit is part of the Type IV Coupling Complex (T4CC), a subcomplex composed of the DotLMNYZ core and the IcmSW-LvgA adapter subunits, linked by the C-terminal tail of DotL (PubMed:17040490, PubMed:22694730, PubMed:28714967, PubMed:32513920). Six DotLMNYZ hetero-pentameric units may assemble into a hexameric nanomachine, forming an inner membrane channel for effectors to pass through (PubMed:32513920). Interacts directly with DotL (PubMed:28714967, PubMed:32513920). Interacts with DotZ (PubMed:32513920).</text>
</comment>
<comment type="subcellular location">
    <subcellularLocation>
        <location evidence="1">Cytoplasm</location>
    </subcellularLocation>
    <text evidence="7">Localizes to the poles of the cell.</text>
</comment>
<accession>Q5ZYB7</accession>
<keyword id="KW-0002">3D-structure</keyword>
<keyword id="KW-0963">Cytoplasm</keyword>
<keyword id="KW-0479">Metal-binding</keyword>
<keyword id="KW-0653">Protein transport</keyword>
<keyword id="KW-1185">Reference proteome</keyword>
<keyword id="KW-0813">Transport</keyword>
<keyword id="KW-0843">Virulence</keyword>
<keyword id="KW-0862">Zinc</keyword>
<sequence length="214" mass="24424">MNVNQTMADNQQRCELKLIASPGSWRLYSARKIDERFKSYEQKIFQRDRYTCQFCGFQARLYQDIVNLDGDYTNNRLSNLVTACCFCAQCFFVESVGVGGYGGGTLIYLPELTQAELNSLCHVLFCAITNDTGYKSSAQNIYRSFKFRSQIVEEKFGEGTSDPAIFGQLMIDSGVNSEEIREKLFKNIRLLPSRAKFRKQIEKWAASALEEIAD</sequence>
<organism>
    <name type="scientific">Legionella pneumophila subsp. pneumophila (strain Philadelphia 1 / ATCC 33152 / DSM 7513)</name>
    <dbReference type="NCBI Taxonomy" id="272624"/>
    <lineage>
        <taxon>Bacteria</taxon>
        <taxon>Pseudomonadati</taxon>
        <taxon>Pseudomonadota</taxon>
        <taxon>Gammaproteobacteria</taxon>
        <taxon>Legionellales</taxon>
        <taxon>Legionellaceae</taxon>
        <taxon>Legionella</taxon>
    </lineage>
</organism>
<evidence type="ECO:0000269" key="1">
    <source>
    </source>
</evidence>
<evidence type="ECO:0000269" key="2">
    <source>
    </source>
</evidence>
<evidence type="ECO:0000269" key="3">
    <source>
    </source>
</evidence>
<evidence type="ECO:0000269" key="4">
    <source>
    </source>
</evidence>
<evidence type="ECO:0000303" key="5">
    <source>
    </source>
</evidence>
<evidence type="ECO:0000303" key="6">
    <source>
    </source>
</evidence>
<evidence type="ECO:0000305" key="7">
    <source>
    </source>
</evidence>
<evidence type="ECO:0000312" key="8">
    <source>
        <dbReference type="EMBL" id="AAU26552.1"/>
    </source>
</evidence>
<evidence type="ECO:0007744" key="9">
    <source>
        <dbReference type="PDB" id="5X1H"/>
    </source>
</evidence>
<evidence type="ECO:0007744" key="10">
    <source>
        <dbReference type="PDB" id="5X42"/>
    </source>
</evidence>
<evidence type="ECO:0007744" key="11">
    <source>
        <dbReference type="PDB" id="6SZ9"/>
    </source>
</evidence>
<evidence type="ECO:0007829" key="12">
    <source>
        <dbReference type="PDB" id="5X1H"/>
    </source>
</evidence>
<evidence type="ECO:0007829" key="13">
    <source>
        <dbReference type="PDB" id="5X42"/>
    </source>
</evidence>
<feature type="chain" id="PRO_0000455592" description="Type 4 apparatus protein DotN">
    <location>
        <begin position="1"/>
        <end position="214"/>
    </location>
</feature>
<feature type="binding site" evidence="3">
    <location>
        <position position="52"/>
    </location>
    <ligand>
        <name>Zn(2+)</name>
        <dbReference type="ChEBI" id="CHEBI:29105"/>
        <note>structural</note>
    </ligand>
</feature>
<feature type="binding site" evidence="3">
    <location>
        <position position="55"/>
    </location>
    <ligand>
        <name>Zn(2+)</name>
        <dbReference type="ChEBI" id="CHEBI:29105"/>
        <note>structural</note>
    </ligand>
</feature>
<feature type="binding site" evidence="3">
    <location>
        <position position="84"/>
    </location>
    <ligand>
        <name>Zn(2+)</name>
        <dbReference type="ChEBI" id="CHEBI:29105"/>
        <note>structural</note>
    </ligand>
</feature>
<feature type="binding site" evidence="3">
    <location>
        <position position="87"/>
    </location>
    <ligand>
        <name>Zn(2+)</name>
        <dbReference type="ChEBI" id="CHEBI:29105"/>
        <note>structural</note>
    </ligand>
</feature>
<feature type="mutagenesis site" description="Decreases intracellular growth in A.castellanii." evidence="4">
    <location>
        <begin position="200"/>
        <end position="214"/>
    </location>
</feature>
<feature type="helix" evidence="13">
    <location>
        <begin position="24"/>
        <end position="33"/>
    </location>
</feature>
<feature type="helix" evidence="13">
    <location>
        <begin position="35"/>
        <end position="47"/>
    </location>
</feature>
<feature type="turn" evidence="13">
    <location>
        <begin position="48"/>
        <end position="50"/>
    </location>
</feature>
<feature type="turn" evidence="13">
    <location>
        <begin position="53"/>
        <end position="55"/>
    </location>
</feature>
<feature type="strand" evidence="13">
    <location>
        <begin position="60"/>
        <end position="62"/>
    </location>
</feature>
<feature type="strand" evidence="13">
    <location>
        <begin position="64"/>
        <end position="67"/>
    </location>
</feature>
<feature type="helix" evidence="13">
    <location>
        <begin position="77"/>
        <end position="79"/>
    </location>
</feature>
<feature type="strand" evidence="13">
    <location>
        <begin position="80"/>
        <end position="83"/>
    </location>
</feature>
<feature type="helix" evidence="13">
    <location>
        <begin position="85"/>
        <end position="88"/>
    </location>
</feature>
<feature type="helix" evidence="13">
    <location>
        <begin position="89"/>
        <end position="95"/>
    </location>
</feature>
<feature type="helix" evidence="12">
    <location>
        <begin position="98"/>
        <end position="100"/>
    </location>
</feature>
<feature type="strand" evidence="13">
    <location>
        <begin position="104"/>
        <end position="108"/>
    </location>
</feature>
<feature type="helix" evidence="13">
    <location>
        <begin position="114"/>
        <end position="129"/>
    </location>
</feature>
<feature type="helix" evidence="13">
    <location>
        <begin position="135"/>
        <end position="147"/>
    </location>
</feature>
<feature type="helix" evidence="13">
    <location>
        <begin position="149"/>
        <end position="156"/>
    </location>
</feature>
<feature type="turn" evidence="13">
    <location>
        <begin position="158"/>
        <end position="161"/>
    </location>
</feature>
<feature type="helix" evidence="13">
    <location>
        <begin position="163"/>
        <end position="172"/>
    </location>
</feature>
<feature type="helix" evidence="12">
    <location>
        <begin position="174"/>
        <end position="176"/>
    </location>
</feature>
<feature type="helix" evidence="13">
    <location>
        <begin position="178"/>
        <end position="184"/>
    </location>
</feature>
<feature type="turn" evidence="13">
    <location>
        <begin position="185"/>
        <end position="187"/>
    </location>
</feature>
<feature type="strand" evidence="13">
    <location>
        <begin position="188"/>
        <end position="192"/>
    </location>
</feature>
<feature type="turn" evidence="13">
    <location>
        <begin position="194"/>
        <end position="197"/>
    </location>
</feature>
<feature type="helix" evidence="13">
    <location>
        <begin position="198"/>
        <end position="206"/>
    </location>
</feature>
<protein>
    <recommendedName>
        <fullName evidence="6">Type 4 apparatus protein DotN</fullName>
    </recommendedName>
</protein>
<gene>
    <name evidence="5" type="primary">dotN</name>
    <name evidence="8" type="synonym">icmJ</name>
    <name evidence="8" type="ordered locus">lpg0455</name>
</gene>
<reference key="1">
    <citation type="journal article" date="2004" name="Science">
        <title>The genomic sequence of the accidental pathogen Legionella pneumophila.</title>
        <authorList>
            <person name="Chien M."/>
            <person name="Morozova I."/>
            <person name="Shi S."/>
            <person name="Sheng H."/>
            <person name="Chen J."/>
            <person name="Gomez S.M."/>
            <person name="Asamani G."/>
            <person name="Hill K."/>
            <person name="Nuara J."/>
            <person name="Feder M."/>
            <person name="Rineer J."/>
            <person name="Greenberg J.J."/>
            <person name="Steshenko V."/>
            <person name="Park S.H."/>
            <person name="Zhao B."/>
            <person name="Teplitskaya E."/>
            <person name="Edwards J.R."/>
            <person name="Pampou S."/>
            <person name="Georghiou A."/>
            <person name="Chou I.-C."/>
            <person name="Iannuccilli W."/>
            <person name="Ulz M.E."/>
            <person name="Kim D.H."/>
            <person name="Geringer-Sameth A."/>
            <person name="Goldsberry C."/>
            <person name="Morozov P."/>
            <person name="Fischer S.G."/>
            <person name="Segal G."/>
            <person name="Qu X."/>
            <person name="Rzhetsky A."/>
            <person name="Zhang P."/>
            <person name="Cayanis E."/>
            <person name="De Jong P.J."/>
            <person name="Ju J."/>
            <person name="Kalachikov S."/>
            <person name="Shuman H.A."/>
            <person name="Russo J.J."/>
        </authorList>
    </citation>
    <scope>NUCLEOTIDE SEQUENCE [LARGE SCALE GENOMIC DNA]</scope>
    <source>
        <strain>Philadelphia 1 / ATCC 33152 / DSM 7513</strain>
    </source>
</reference>
<reference key="2">
    <citation type="journal article" date="2006" name="Mol. Microbiol.">
        <title>Identification of the core transmembrane complex of the Legionella Dot/Icm type IV secretion system.</title>
        <authorList>
            <person name="Vincent C.D."/>
            <person name="Friedman J.R."/>
            <person name="Jeong K.C."/>
            <person name="Buford E.C."/>
            <person name="Miller J.L."/>
            <person name="Vogel J.P."/>
        </authorList>
    </citation>
    <scope>FUNCTION</scope>
    <scope>SUBUNIT</scope>
    <scope>SUBCELLULAR LOCATION</scope>
    <source>
        <strain>Philadelphia 1 / Lp02</strain>
    </source>
</reference>
<reference key="3">
    <citation type="journal article" date="2012" name="Mol. Microbiol.">
        <title>Identification of the DotL coupling protein subcomplex of the Legionella Dot/Icm type IV secretion system.</title>
        <authorList>
            <person name="Vincent C.D."/>
            <person name="Friedman J.R."/>
            <person name="Jeong K.C."/>
            <person name="Sutherland M.C."/>
            <person name="Vogel J.P."/>
        </authorList>
    </citation>
    <scope>FUNCTION</scope>
    <scope>SUBUNIT</scope>
    <scope>SUBCELLULAR LOCATION</scope>
    <source>
        <strain>Philadelphia 1 / Lp02</strain>
    </source>
</reference>
<reference evidence="9 10" key="4">
    <citation type="journal article" date="2017" name="Nat. Microbiol.">
        <title>Architecture of the type IV coupling protein complex of Legionella pneumophila.</title>
        <authorList>
            <person name="Kwak M.J."/>
            <person name="Kim J.D."/>
            <person name="Kim H."/>
            <person name="Kim C."/>
            <person name="Bowman J.W."/>
            <person name="Kim S."/>
            <person name="Joo K."/>
            <person name="Lee J."/>
            <person name="Jin K.S."/>
            <person name="Kim Y.G."/>
            <person name="Lee N.K."/>
            <person name="Jung J.U."/>
            <person name="Oh B.H."/>
        </authorList>
    </citation>
    <scope>X-RAY CRYSTALLOGRAPHY (1.80 ANGSTROMS) OF 13-207 AND 2-214 IN COMPLEXES WITH ZINC AND DOTL</scope>
    <scope>SUBUNIT</scope>
    <scope>INTERACTION WITH DOTL</scope>
    <source>
        <strain>Philadelphia 1 / ATCC 33152 / DSM 7513</strain>
    </source>
</reference>
<reference evidence="11" key="5">
    <citation type="journal article" date="2020" name="Nat. Commun.">
        <title>Mechanism of effector capture and delivery by the type IV secretion system from Legionella pneumophila.</title>
        <authorList>
            <person name="Meir A."/>
            <person name="Mace K."/>
            <person name="Lukoyanova N."/>
            <person name="Chetrit D."/>
            <person name="Hospenthal M.K."/>
            <person name="Redzej A."/>
            <person name="Roy C."/>
            <person name="Waksman G."/>
        </authorList>
    </citation>
    <scope>STRUCTURE BY ELECTRON MICROSCOPY (3.70 ANGSTROMS) OF 7-214</scope>
    <scope>FUNCTION</scope>
    <scope>SUBUNIT</scope>
    <scope>MUTAGENESIS OF 200-GLN--ASP-214</scope>
    <source>
        <strain>Philadelphia 1 / Lp01</strain>
    </source>
</reference>
<proteinExistence type="evidence at protein level"/>
<dbReference type="EMBL" id="AE017354">
    <property type="protein sequence ID" value="AAU26552.1"/>
    <property type="molecule type" value="Genomic_DNA"/>
</dbReference>
<dbReference type="RefSeq" id="YP_094499.1">
    <property type="nucleotide sequence ID" value="NC_002942.5"/>
</dbReference>
<dbReference type="PDB" id="5X1H">
    <property type="method" value="X-ray"/>
    <property type="resolution" value="3.00 A"/>
    <property type="chains" value="A/C/E/G/I/K/M/O/S/U/W=7-214, Q=13-207"/>
</dbReference>
<dbReference type="PDB" id="5X42">
    <property type="method" value="X-ray"/>
    <property type="resolution" value="1.80 A"/>
    <property type="chains" value="A=13-207, C=2-214"/>
</dbReference>
<dbReference type="PDB" id="6SZ9">
    <property type="method" value="EM"/>
    <property type="resolution" value="3.70 A"/>
    <property type="chains" value="C=7-214"/>
</dbReference>
<dbReference type="PDB" id="7OVB">
    <property type="method" value="EM"/>
    <property type="resolution" value="3.61 A"/>
    <property type="chains" value="C=7-214"/>
</dbReference>
<dbReference type="PDBsum" id="5X1H"/>
<dbReference type="PDBsum" id="5X42"/>
<dbReference type="PDBsum" id="6SZ9"/>
<dbReference type="PDBsum" id="7OVB"/>
<dbReference type="EMDB" id="EMD-10350"/>
<dbReference type="EMDB" id="EMD-13083"/>
<dbReference type="SMR" id="Q5ZYB7"/>
<dbReference type="STRING" id="272624.lpg0455"/>
<dbReference type="TCDB" id="3.A.7.9.1">
    <property type="family name" value="the type iv (conjugal dna-protein transfer or virb) secretory pathway (ivsp) family"/>
</dbReference>
<dbReference type="PaxDb" id="272624-lpg0455"/>
<dbReference type="KEGG" id="lpn:lpg0455"/>
<dbReference type="PATRIC" id="fig|272624.6.peg.471"/>
<dbReference type="eggNOG" id="COG1403">
    <property type="taxonomic scope" value="Bacteria"/>
</dbReference>
<dbReference type="HOGENOM" id="CLU_096064_0_0_6"/>
<dbReference type="OrthoDB" id="5649742at2"/>
<dbReference type="Proteomes" id="UP000000609">
    <property type="component" value="Chromosome"/>
</dbReference>
<dbReference type="GO" id="GO:0005737">
    <property type="term" value="C:cytoplasm"/>
    <property type="evidence" value="ECO:0007669"/>
    <property type="project" value="UniProtKB-SubCell"/>
</dbReference>
<dbReference type="GO" id="GO:0046872">
    <property type="term" value="F:metal ion binding"/>
    <property type="evidence" value="ECO:0007669"/>
    <property type="project" value="UniProtKB-KW"/>
</dbReference>
<dbReference type="GO" id="GO:0015031">
    <property type="term" value="P:protein transport"/>
    <property type="evidence" value="ECO:0007669"/>
    <property type="project" value="UniProtKB-KW"/>
</dbReference>
<dbReference type="InterPro" id="IPR003615">
    <property type="entry name" value="HNH_nuc"/>
</dbReference>
<dbReference type="InterPro" id="IPR053558">
    <property type="entry name" value="T4SS_Dot/Icm_subcomplex"/>
</dbReference>
<dbReference type="NCBIfam" id="NF038221">
    <property type="entry name" value="IcmJ_DotN_IVB"/>
    <property type="match status" value="1"/>
</dbReference>
<dbReference type="SMART" id="SM00507">
    <property type="entry name" value="HNHc"/>
    <property type="match status" value="1"/>
</dbReference>
<name>DOTN_LEGPH</name>